<dbReference type="EMBL" id="CP000744">
    <property type="protein sequence ID" value="ABR86657.1"/>
    <property type="molecule type" value="Genomic_DNA"/>
</dbReference>
<dbReference type="RefSeq" id="WP_012076845.1">
    <property type="nucleotide sequence ID" value="NC_009656.1"/>
</dbReference>
<dbReference type="SMR" id="A6V9R6"/>
<dbReference type="KEGG" id="pap:PSPA7_4451"/>
<dbReference type="HOGENOM" id="CLU_063050_0_1_6"/>
<dbReference type="Proteomes" id="UP000001582">
    <property type="component" value="Chromosome"/>
</dbReference>
<dbReference type="GO" id="GO:0043590">
    <property type="term" value="C:bacterial nucleoid"/>
    <property type="evidence" value="ECO:0007669"/>
    <property type="project" value="TreeGrafter"/>
</dbReference>
<dbReference type="GO" id="GO:0005737">
    <property type="term" value="C:cytoplasm"/>
    <property type="evidence" value="ECO:0007669"/>
    <property type="project" value="UniProtKB-UniRule"/>
</dbReference>
<dbReference type="GO" id="GO:0003690">
    <property type="term" value="F:double-stranded DNA binding"/>
    <property type="evidence" value="ECO:0007669"/>
    <property type="project" value="TreeGrafter"/>
</dbReference>
<dbReference type="GO" id="GO:0003727">
    <property type="term" value="F:single-stranded RNA binding"/>
    <property type="evidence" value="ECO:0007669"/>
    <property type="project" value="TreeGrafter"/>
</dbReference>
<dbReference type="HAMAP" id="MF_00730">
    <property type="entry name" value="NdpA"/>
    <property type="match status" value="1"/>
</dbReference>
<dbReference type="InterPro" id="IPR007358">
    <property type="entry name" value="Nucleoid_associated_NdpA"/>
</dbReference>
<dbReference type="NCBIfam" id="NF001557">
    <property type="entry name" value="PRK00378.1"/>
    <property type="match status" value="1"/>
</dbReference>
<dbReference type="PANTHER" id="PTHR38772">
    <property type="match status" value="1"/>
</dbReference>
<dbReference type="PANTHER" id="PTHR38772:SF1">
    <property type="entry name" value="NUCLEOID-ASSOCIATED PROTEIN YEJK"/>
    <property type="match status" value="1"/>
</dbReference>
<dbReference type="Pfam" id="PF04245">
    <property type="entry name" value="NA37"/>
    <property type="match status" value="1"/>
</dbReference>
<comment type="subcellular location">
    <subcellularLocation>
        <location evidence="1">Cytoplasm</location>
        <location evidence="1">Nucleoid</location>
    </subcellularLocation>
</comment>
<comment type="similarity">
    <text evidence="1">Belongs to the YejK family.</text>
</comment>
<organism>
    <name type="scientific">Pseudomonas paraeruginosa (strain DSM 24068 / PA7)</name>
    <name type="common">Pseudomonas aeruginosa (strain PA7)</name>
    <dbReference type="NCBI Taxonomy" id="381754"/>
    <lineage>
        <taxon>Bacteria</taxon>
        <taxon>Pseudomonadati</taxon>
        <taxon>Pseudomonadota</taxon>
        <taxon>Gammaproteobacteria</taxon>
        <taxon>Pseudomonadales</taxon>
        <taxon>Pseudomonadaceae</taxon>
        <taxon>Pseudomonas</taxon>
        <taxon>Pseudomonas paraeruginosa</taxon>
    </lineage>
</organism>
<evidence type="ECO:0000255" key="1">
    <source>
        <dbReference type="HAMAP-Rule" id="MF_00730"/>
    </source>
</evidence>
<protein>
    <recommendedName>
        <fullName evidence="1">Nucleoid-associated protein PSPA7_4451</fullName>
    </recommendedName>
</protein>
<gene>
    <name type="ordered locus">PSPA7_4451</name>
</gene>
<keyword id="KW-0963">Cytoplasm</keyword>
<feature type="chain" id="PRO_1000045931" description="Nucleoid-associated protein PSPA7_4451">
    <location>
        <begin position="1"/>
        <end position="340"/>
    </location>
</feature>
<reference key="1">
    <citation type="submission" date="2007-06" db="EMBL/GenBank/DDBJ databases">
        <authorList>
            <person name="Dodson R.J."/>
            <person name="Harkins D."/>
            <person name="Paulsen I.T."/>
        </authorList>
    </citation>
    <scope>NUCLEOTIDE SEQUENCE [LARGE SCALE GENOMIC DNA]</scope>
    <source>
        <strain>DSM 24068 / PA7</strain>
    </source>
</reference>
<accession>A6V9R6</accession>
<proteinExistence type="inferred from homology"/>
<sequence>MPIKHAIVHLIEKKPDGTPAMLHARDAELGDSQAIENLLADLNESYNAKNKAWGFFQGESGAYPFSGWLGDYLEGDRDFVGFSREAVEHLQKLMEESNLSTGGHILFAHYQQGMTDYLAIALLHHSEGVAVNESLEVTPSRHLDLAQLHLAARINISEWRNNKQSKQYISFIKGKGGKKVSDYFRDFIGCQEGVDSPSETRTLLKAFSDFVESEDMAEEQAREKTETLVDYATSQARIGEPMTLDALSELMDDQQPRAFYDYIRNKDYGLSPEIPADKRTLNQFRRFTGRAEGLSISFEAHLLGSRIEYDEERDTLRISSLPTQLRDQLKRRKAEQESTS</sequence>
<name>NDPA_PSEP7</name>